<name>PTRD_LACCA</name>
<dbReference type="EMBL" id="AF129168">
    <property type="protein sequence ID" value="AAF24134.1"/>
    <property type="molecule type" value="Genomic_DNA"/>
</dbReference>
<dbReference type="SMR" id="Q9RGG2"/>
<dbReference type="TCDB" id="4.A.6.1.26">
    <property type="family name" value="the pts mannose-fructose-sorbose (man) family"/>
</dbReference>
<dbReference type="eggNOG" id="COG3716">
    <property type="taxonomic scope" value="Bacteria"/>
</dbReference>
<dbReference type="OMA" id="FRWWYAN"/>
<dbReference type="BRENDA" id="2.7.1.206">
    <property type="organism ID" value="2854"/>
</dbReference>
<dbReference type="GO" id="GO:0005886">
    <property type="term" value="C:plasma membrane"/>
    <property type="evidence" value="ECO:0007669"/>
    <property type="project" value="UniProtKB-SubCell"/>
</dbReference>
<dbReference type="GO" id="GO:0009401">
    <property type="term" value="P:phosphoenolpyruvate-dependent sugar phosphotransferase system"/>
    <property type="evidence" value="ECO:0007669"/>
    <property type="project" value="UniProtKB-KW"/>
</dbReference>
<dbReference type="InterPro" id="IPR050303">
    <property type="entry name" value="GatZ_KbaZ_carbometab"/>
</dbReference>
<dbReference type="InterPro" id="IPR004704">
    <property type="entry name" value="PTS_IID_man"/>
</dbReference>
<dbReference type="NCBIfam" id="TIGR00828">
    <property type="entry name" value="EIID-AGA"/>
    <property type="match status" value="1"/>
</dbReference>
<dbReference type="NCBIfam" id="NF008315">
    <property type="entry name" value="PRK11103.1"/>
    <property type="match status" value="1"/>
</dbReference>
<dbReference type="PANTHER" id="PTHR32502">
    <property type="entry name" value="N-ACETYLGALACTOSAMINE PERMEASE II COMPONENT-RELATED"/>
    <property type="match status" value="1"/>
</dbReference>
<dbReference type="PANTHER" id="PTHR32502:SF5">
    <property type="entry name" value="N-ACETYLGALACTOSAMINE PERMEASE IID COMPONENT-RELATED"/>
    <property type="match status" value="1"/>
</dbReference>
<dbReference type="Pfam" id="PF03613">
    <property type="entry name" value="EIID-AGA"/>
    <property type="match status" value="1"/>
</dbReference>
<dbReference type="PROSITE" id="PS51108">
    <property type="entry name" value="PTS_EIID"/>
    <property type="match status" value="1"/>
</dbReference>
<gene>
    <name evidence="3" type="primary">sorD</name>
</gene>
<feature type="chain" id="PRO_0000437533" description="PTS system sorbose-specific EIID component">
    <location>
        <begin position="1"/>
        <end position="282"/>
    </location>
</feature>
<feature type="transmembrane region" description="Helical" evidence="1">
    <location>
        <begin position="135"/>
        <end position="155"/>
    </location>
</feature>
<feature type="transmembrane region" description="Helical" evidence="1">
    <location>
        <begin position="197"/>
        <end position="217"/>
    </location>
</feature>
<feature type="transmembrane region" description="Helical" evidence="1">
    <location>
        <begin position="234"/>
        <end position="254"/>
    </location>
</feature>
<feature type="transmembrane region" description="Helical" evidence="1">
    <location>
        <begin position="261"/>
        <end position="281"/>
    </location>
</feature>
<feature type="domain" description="PTS EIID" evidence="1">
    <location>
        <begin position="13"/>
        <end position="281"/>
    </location>
</feature>
<protein>
    <recommendedName>
        <fullName evidence="3">PTS system sorbose-specific EIID component</fullName>
    </recommendedName>
    <alternativeName>
        <fullName evidence="3">EIID-Sor</fullName>
    </alternativeName>
    <alternativeName>
        <fullName evidence="3">Sorbose permease IID component</fullName>
    </alternativeName>
</protein>
<sequence length="282" mass="30788">MADQPVQVNKLKTKITKGDMFKTFVFENFQQASFNFERIHALAFCVDMIPTIKRVYSKKEDQVAALKRHLVFFNTTPAMCGPIVGVTMALEEGRAAGEPIDDGTINSFKVGLMGPLAGVGDPLMWGTLRPILAALGASLALQGSWLGPILFFVAFNAVRLSLKWYGLQLGFSRGLALVKDMSGNLLQKITEGATVLGLFIMGILVTKWTTINVPLVVSKTTVNGKTTVTTLQNILDQFCPGLLALGWTLLCMYLLRKKVSPILLIFALFGVGIVGYWLGILK</sequence>
<proteinExistence type="evidence at transcript level"/>
<reference key="1">
    <citation type="journal article" date="2000" name="J. Bacteriol.">
        <title>Genetics of L-sorbose transport and metabolism in Lactobacillus casei.</title>
        <authorList>
            <person name="Yebra M.J."/>
            <person name="Veyrat A."/>
            <person name="Santos M.A."/>
            <person name="Perez-Martinez G."/>
        </authorList>
    </citation>
    <scope>NUCLEOTIDE SEQUENCE [GENOMIC DNA]</scope>
    <source>
        <strain>ATCC 393 / DSM 20011 / JCM 1134 / BCRC 10697 / CCUG 21451 / NBRC 15883 / NCIMB 11970 / NCDO 161 / WDCM 00100</strain>
    </source>
</reference>
<evidence type="ECO:0000255" key="1">
    <source>
        <dbReference type="PROSITE-ProRule" id="PRU00431"/>
    </source>
</evidence>
<evidence type="ECO:0000269" key="2">
    <source>
    </source>
</evidence>
<evidence type="ECO:0000303" key="3">
    <source>
    </source>
</evidence>
<organism>
    <name type="scientific">Lacticaseibacillus casei</name>
    <name type="common">Lactobacillus casei</name>
    <dbReference type="NCBI Taxonomy" id="1582"/>
    <lineage>
        <taxon>Bacteria</taxon>
        <taxon>Bacillati</taxon>
        <taxon>Bacillota</taxon>
        <taxon>Bacilli</taxon>
        <taxon>Lactobacillales</taxon>
        <taxon>Lactobacillaceae</taxon>
        <taxon>Lacticaseibacillus</taxon>
    </lineage>
</organism>
<keyword id="KW-1003">Cell membrane</keyword>
<keyword id="KW-0472">Membrane</keyword>
<keyword id="KW-0598">Phosphotransferase system</keyword>
<keyword id="KW-0762">Sugar transport</keyword>
<keyword id="KW-0812">Transmembrane</keyword>
<keyword id="KW-1133">Transmembrane helix</keyword>
<keyword id="KW-0813">Transport</keyword>
<comment type="function">
    <text evidence="2">The phosphoenolpyruvate-dependent sugar phosphotransferase system (PTS), a major carbohydrate active transport system, catalyzes the phosphorylation of incoming sugar substrates concomitant with their translocation across the cell membrane. The enzyme II SorABCD PTS system is involved in L-sorbose transport.</text>
</comment>
<comment type="subcellular location">
    <subcellularLocation>
        <location evidence="1">Cell membrane</location>
        <topology evidence="1">Multi-pass membrane protein</topology>
    </subcellularLocation>
</comment>
<comment type="induction">
    <text evidence="2">Induced by L-sorbose and repressed by D-glucose.</text>
</comment>
<comment type="domain">
    <text evidence="1">The EIID domain, with its homologous EIIC domain, forms the PTS system translocation channel and contains part of its specific substrate-binding site.</text>
</comment>
<accession>Q9RGG2</accession>
<accession>F2M4V2</accession>